<name>THI4_METM7</name>
<feature type="chain" id="PRO_1000115612" description="Thiamine thiazole synthase">
    <location>
        <begin position="1"/>
        <end position="262"/>
    </location>
</feature>
<feature type="binding site" description="in other chain" evidence="1">
    <location>
        <position position="40"/>
    </location>
    <ligand>
        <name>NAD(+)</name>
        <dbReference type="ChEBI" id="CHEBI:57540"/>
        <note>ligand shared between two adjacent protomers</note>
    </ligand>
</feature>
<feature type="binding site" description="in other chain" evidence="1">
    <location>
        <begin position="59"/>
        <end position="60"/>
    </location>
    <ligand>
        <name>NAD(+)</name>
        <dbReference type="ChEBI" id="CHEBI:57540"/>
        <note>ligand shared between two adjacent protomers</note>
    </ligand>
</feature>
<feature type="binding site" description="in other chain" evidence="1">
    <location>
        <position position="67"/>
    </location>
    <ligand>
        <name>NAD(+)</name>
        <dbReference type="ChEBI" id="CHEBI:57540"/>
        <note>ligand shared between two adjacent protomers</note>
    </ligand>
</feature>
<feature type="binding site" description="in other chain" evidence="1">
    <location>
        <position position="133"/>
    </location>
    <ligand>
        <name>NAD(+)</name>
        <dbReference type="ChEBI" id="CHEBI:57540"/>
        <note>ligand shared between two adjacent protomers</note>
    </ligand>
</feature>
<feature type="binding site" evidence="1">
    <location>
        <begin position="159"/>
        <end position="161"/>
    </location>
    <ligand>
        <name>NAD(+)</name>
        <dbReference type="ChEBI" id="CHEBI:57540"/>
        <note>ligand shared between two adjacent protomers</note>
    </ligand>
</feature>
<feature type="binding site" evidence="1">
    <location>
        <position position="161"/>
    </location>
    <ligand>
        <name>Fe cation</name>
        <dbReference type="ChEBI" id="CHEBI:24875"/>
        <note>ligand shared between two adjacent protomers</note>
    </ligand>
</feature>
<feature type="binding site" description="in other chain" evidence="1">
    <location>
        <position position="176"/>
    </location>
    <ligand>
        <name>Fe cation</name>
        <dbReference type="ChEBI" id="CHEBI:24875"/>
        <note>ligand shared between two adjacent protomers</note>
    </ligand>
</feature>
<feature type="binding site" description="in other chain" evidence="1">
    <location>
        <position position="179"/>
    </location>
    <ligand>
        <name>NAD(+)</name>
        <dbReference type="ChEBI" id="CHEBI:57540"/>
        <note>ligand shared between two adjacent protomers</note>
    </ligand>
</feature>
<feature type="binding site" description="in other chain" evidence="1">
    <location>
        <position position="226"/>
    </location>
    <ligand>
        <name>NAD(+)</name>
        <dbReference type="ChEBI" id="CHEBI:57540"/>
        <note>ligand shared between two adjacent protomers</note>
    </ligand>
</feature>
<feature type="binding site" evidence="1">
    <location>
        <position position="236"/>
    </location>
    <ligand>
        <name>glycine</name>
        <dbReference type="ChEBI" id="CHEBI:57305"/>
    </ligand>
</feature>
<proteinExistence type="inferred from homology"/>
<sequence>MDGKLRADEVAVTKSILKSTFNMWMDIIDVDVVIIGAGPSGLTAAKYLAQNGVKTVVLERHLSFGGGTWGGGMGFPNIVVEKPADEILREAGIKLDEVDGEDELFTADSVEVPAKLGVAAIDAGAKILTGIVVEDLILKEDKIAGVVIQSYAIEKAGLHIDPLTISAKYVIDSTGHDASAVHTLARKNKDLGIEVPGEKSMWAEKGENSLTRNTREIFPGLYVCGMAANAYHAGYRMGAIFGGMYLSGKKCAEMILEKLENK</sequence>
<gene>
    <name evidence="1" type="primary">thi4</name>
    <name type="ordered locus">MmarC7_0597</name>
</gene>
<reference key="1">
    <citation type="submission" date="2007-06" db="EMBL/GenBank/DDBJ databases">
        <title>Complete sequence of Methanococcus maripaludis C7.</title>
        <authorList>
            <consortium name="US DOE Joint Genome Institute"/>
            <person name="Copeland A."/>
            <person name="Lucas S."/>
            <person name="Lapidus A."/>
            <person name="Barry K."/>
            <person name="Glavina del Rio T."/>
            <person name="Dalin E."/>
            <person name="Tice H."/>
            <person name="Pitluck S."/>
            <person name="Clum A."/>
            <person name="Schmutz J."/>
            <person name="Larimer F."/>
            <person name="Land M."/>
            <person name="Hauser L."/>
            <person name="Kyrpides N."/>
            <person name="Anderson I."/>
            <person name="Sieprawska-Lupa M."/>
            <person name="Whitman W.B."/>
            <person name="Richardson P."/>
        </authorList>
    </citation>
    <scope>NUCLEOTIDE SEQUENCE [LARGE SCALE GENOMIC DNA]</scope>
    <source>
        <strain>C7 / ATCC BAA-1331</strain>
    </source>
</reference>
<dbReference type="EC" id="2.4.2.59" evidence="1"/>
<dbReference type="EMBL" id="CP000745">
    <property type="protein sequence ID" value="ABR65665.1"/>
    <property type="molecule type" value="Genomic_DNA"/>
</dbReference>
<dbReference type="SMR" id="A6VGT9"/>
<dbReference type="STRING" id="426368.MmarC7_0597"/>
<dbReference type="KEGG" id="mmz:MmarC7_0597"/>
<dbReference type="eggNOG" id="arCOG00574">
    <property type="taxonomic scope" value="Archaea"/>
</dbReference>
<dbReference type="HOGENOM" id="CLU_053727_2_0_2"/>
<dbReference type="OrthoDB" id="4240at2157"/>
<dbReference type="UniPathway" id="UPA00060"/>
<dbReference type="GO" id="GO:0005506">
    <property type="term" value="F:iron ion binding"/>
    <property type="evidence" value="ECO:0007669"/>
    <property type="project" value="UniProtKB-UniRule"/>
</dbReference>
<dbReference type="GO" id="GO:0016763">
    <property type="term" value="F:pentosyltransferase activity"/>
    <property type="evidence" value="ECO:0007669"/>
    <property type="project" value="UniProtKB-UniRule"/>
</dbReference>
<dbReference type="GO" id="GO:0009228">
    <property type="term" value="P:thiamine biosynthetic process"/>
    <property type="evidence" value="ECO:0007669"/>
    <property type="project" value="UniProtKB-KW"/>
</dbReference>
<dbReference type="GO" id="GO:0009229">
    <property type="term" value="P:thiamine diphosphate biosynthetic process"/>
    <property type="evidence" value="ECO:0007669"/>
    <property type="project" value="UniProtKB-UniRule"/>
</dbReference>
<dbReference type="GO" id="GO:0052837">
    <property type="term" value="P:thiazole biosynthetic process"/>
    <property type="evidence" value="ECO:0007669"/>
    <property type="project" value="UniProtKB-UniRule"/>
</dbReference>
<dbReference type="Gene3D" id="3.50.50.60">
    <property type="entry name" value="FAD/NAD(P)-binding domain"/>
    <property type="match status" value="1"/>
</dbReference>
<dbReference type="HAMAP" id="MF_00304">
    <property type="entry name" value="Thi4"/>
    <property type="match status" value="1"/>
</dbReference>
<dbReference type="InterPro" id="IPR036188">
    <property type="entry name" value="FAD/NAD-bd_sf"/>
</dbReference>
<dbReference type="InterPro" id="IPR002922">
    <property type="entry name" value="Thi4_fam"/>
</dbReference>
<dbReference type="InterPro" id="IPR022828">
    <property type="entry name" value="Thi4_prok"/>
</dbReference>
<dbReference type="NCBIfam" id="TIGR00292">
    <property type="entry name" value="sulfide-dependent adenosine diphosphate thiazole synthase"/>
    <property type="match status" value="1"/>
</dbReference>
<dbReference type="PANTHER" id="PTHR43422">
    <property type="entry name" value="THIAMINE THIAZOLE SYNTHASE"/>
    <property type="match status" value="1"/>
</dbReference>
<dbReference type="PANTHER" id="PTHR43422:SF3">
    <property type="entry name" value="THIAMINE THIAZOLE SYNTHASE"/>
    <property type="match status" value="1"/>
</dbReference>
<dbReference type="Pfam" id="PF01946">
    <property type="entry name" value="Thi4"/>
    <property type="match status" value="1"/>
</dbReference>
<dbReference type="PRINTS" id="PR00420">
    <property type="entry name" value="RNGMNOXGNASE"/>
</dbReference>
<dbReference type="SUPFAM" id="SSF51905">
    <property type="entry name" value="FAD/NAD(P)-binding domain"/>
    <property type="match status" value="1"/>
</dbReference>
<keyword id="KW-0408">Iron</keyword>
<keyword id="KW-0479">Metal-binding</keyword>
<keyword id="KW-0520">NAD</keyword>
<keyword id="KW-0784">Thiamine biosynthesis</keyword>
<keyword id="KW-0808">Transferase</keyword>
<comment type="function">
    <text evidence="1">Involved in the biosynthesis of the thiazole moiety of thiamine. Catalyzes the conversion of NAD and glycine to adenosine diphosphate 5-(2-hydroxyethyl)-4-methylthiazole-2-carboxylate (ADT), an adenylated thiazole intermediate, using free sulfide as a source of sulfur.</text>
</comment>
<comment type="catalytic activity">
    <reaction evidence="1">
        <text>hydrogen sulfide + glycine + NAD(+) = ADP-5-ethyl-4-methylthiazole-2-carboxylate + nicotinamide + 3 H2O + H(+)</text>
        <dbReference type="Rhea" id="RHEA:55704"/>
        <dbReference type="ChEBI" id="CHEBI:15377"/>
        <dbReference type="ChEBI" id="CHEBI:15378"/>
        <dbReference type="ChEBI" id="CHEBI:17154"/>
        <dbReference type="ChEBI" id="CHEBI:29919"/>
        <dbReference type="ChEBI" id="CHEBI:57305"/>
        <dbReference type="ChEBI" id="CHEBI:57540"/>
        <dbReference type="ChEBI" id="CHEBI:139151"/>
        <dbReference type="EC" id="2.4.2.59"/>
    </reaction>
</comment>
<comment type="cofactor">
    <cofactor evidence="1">
        <name>Fe(2+)</name>
        <dbReference type="ChEBI" id="CHEBI:29033"/>
    </cofactor>
</comment>
<comment type="pathway">
    <text evidence="1">Cofactor biosynthesis; thiamine diphosphate biosynthesis.</text>
</comment>
<comment type="subunit">
    <text evidence="1">Homooctamer; tetramer of dimers.</text>
</comment>
<comment type="similarity">
    <text evidence="1">Belongs to the THI4 family.</text>
</comment>
<accession>A6VGT9</accession>
<evidence type="ECO:0000255" key="1">
    <source>
        <dbReference type="HAMAP-Rule" id="MF_00304"/>
    </source>
</evidence>
<protein>
    <recommendedName>
        <fullName evidence="1">Thiamine thiazole synthase</fullName>
        <ecNumber evidence="1">2.4.2.59</ecNumber>
    </recommendedName>
</protein>
<organism>
    <name type="scientific">Methanococcus maripaludis (strain C7 / ATCC BAA-1331)</name>
    <dbReference type="NCBI Taxonomy" id="426368"/>
    <lineage>
        <taxon>Archaea</taxon>
        <taxon>Methanobacteriati</taxon>
        <taxon>Methanobacteriota</taxon>
        <taxon>Methanomada group</taxon>
        <taxon>Methanococci</taxon>
        <taxon>Methanococcales</taxon>
        <taxon>Methanococcaceae</taxon>
        <taxon>Methanococcus</taxon>
    </lineage>
</organism>